<gene>
    <name evidence="1" type="primary">rlmH</name>
    <name type="ordered locus">HPP12_0945</name>
</gene>
<evidence type="ECO:0000255" key="1">
    <source>
        <dbReference type="HAMAP-Rule" id="MF_00658"/>
    </source>
</evidence>
<organism>
    <name type="scientific">Helicobacter pylori (strain P12)</name>
    <dbReference type="NCBI Taxonomy" id="570508"/>
    <lineage>
        <taxon>Bacteria</taxon>
        <taxon>Pseudomonadati</taxon>
        <taxon>Campylobacterota</taxon>
        <taxon>Epsilonproteobacteria</taxon>
        <taxon>Campylobacterales</taxon>
        <taxon>Helicobacteraceae</taxon>
        <taxon>Helicobacter</taxon>
    </lineage>
</organism>
<dbReference type="EC" id="2.1.1.177" evidence="1"/>
<dbReference type="EMBL" id="CP001217">
    <property type="protein sequence ID" value="ACJ08097.1"/>
    <property type="molecule type" value="Genomic_DNA"/>
</dbReference>
<dbReference type="SMR" id="B6JMG9"/>
<dbReference type="KEGG" id="hpp:HPP12_0945"/>
<dbReference type="HOGENOM" id="CLU_100552_2_1_7"/>
<dbReference type="Proteomes" id="UP000008198">
    <property type="component" value="Chromosome"/>
</dbReference>
<dbReference type="GO" id="GO:0005737">
    <property type="term" value="C:cytoplasm"/>
    <property type="evidence" value="ECO:0007669"/>
    <property type="project" value="UniProtKB-SubCell"/>
</dbReference>
<dbReference type="GO" id="GO:0070038">
    <property type="term" value="F:rRNA (pseudouridine-N3-)-methyltransferase activity"/>
    <property type="evidence" value="ECO:0007669"/>
    <property type="project" value="UniProtKB-UniRule"/>
</dbReference>
<dbReference type="CDD" id="cd18081">
    <property type="entry name" value="RlmH-like"/>
    <property type="match status" value="1"/>
</dbReference>
<dbReference type="Gene3D" id="3.40.1280.10">
    <property type="match status" value="1"/>
</dbReference>
<dbReference type="HAMAP" id="MF_00658">
    <property type="entry name" value="23SrRNA_methyltr_H"/>
    <property type="match status" value="1"/>
</dbReference>
<dbReference type="InterPro" id="IPR029028">
    <property type="entry name" value="Alpha/beta_knot_MTases"/>
</dbReference>
<dbReference type="InterPro" id="IPR003742">
    <property type="entry name" value="RlmH-like"/>
</dbReference>
<dbReference type="InterPro" id="IPR029026">
    <property type="entry name" value="tRNA_m1G_MTases_N"/>
</dbReference>
<dbReference type="NCBIfam" id="NF000987">
    <property type="entry name" value="PRK00103.2-1"/>
    <property type="match status" value="1"/>
</dbReference>
<dbReference type="PANTHER" id="PTHR33603">
    <property type="entry name" value="METHYLTRANSFERASE"/>
    <property type="match status" value="1"/>
</dbReference>
<dbReference type="PANTHER" id="PTHR33603:SF1">
    <property type="entry name" value="RIBOSOMAL RNA LARGE SUBUNIT METHYLTRANSFERASE H"/>
    <property type="match status" value="1"/>
</dbReference>
<dbReference type="Pfam" id="PF02590">
    <property type="entry name" value="SPOUT_MTase"/>
    <property type="match status" value="1"/>
</dbReference>
<dbReference type="PIRSF" id="PIRSF004505">
    <property type="entry name" value="MT_bac"/>
    <property type="match status" value="1"/>
</dbReference>
<dbReference type="SUPFAM" id="SSF75217">
    <property type="entry name" value="alpha/beta knot"/>
    <property type="match status" value="1"/>
</dbReference>
<name>RLMH_HELP2</name>
<proteinExistence type="inferred from homology"/>
<feature type="chain" id="PRO_0000366608" description="Ribosomal RNA large subunit methyltransferase H">
    <location>
        <begin position="1"/>
        <end position="150"/>
    </location>
</feature>
<feature type="binding site" evidence="1">
    <location>
        <position position="100"/>
    </location>
    <ligand>
        <name>S-adenosyl-L-methionine</name>
        <dbReference type="ChEBI" id="CHEBI:59789"/>
    </ligand>
</feature>
<feature type="binding site" evidence="1">
    <location>
        <begin position="118"/>
        <end position="123"/>
    </location>
    <ligand>
        <name>S-adenosyl-L-methionine</name>
        <dbReference type="ChEBI" id="CHEBI:59789"/>
    </ligand>
</feature>
<comment type="function">
    <text evidence="1">Specifically methylates the pseudouridine at position 1915 (m3Psi1915) in 23S rRNA.</text>
</comment>
<comment type="catalytic activity">
    <reaction evidence="1">
        <text>pseudouridine(1915) in 23S rRNA + S-adenosyl-L-methionine = N(3)-methylpseudouridine(1915) in 23S rRNA + S-adenosyl-L-homocysteine + H(+)</text>
        <dbReference type="Rhea" id="RHEA:42752"/>
        <dbReference type="Rhea" id="RHEA-COMP:10221"/>
        <dbReference type="Rhea" id="RHEA-COMP:10222"/>
        <dbReference type="ChEBI" id="CHEBI:15378"/>
        <dbReference type="ChEBI" id="CHEBI:57856"/>
        <dbReference type="ChEBI" id="CHEBI:59789"/>
        <dbReference type="ChEBI" id="CHEBI:65314"/>
        <dbReference type="ChEBI" id="CHEBI:74486"/>
        <dbReference type="EC" id="2.1.1.177"/>
    </reaction>
</comment>
<comment type="subunit">
    <text evidence="1">Homodimer.</text>
</comment>
<comment type="subcellular location">
    <subcellularLocation>
        <location evidence="1">Cytoplasm</location>
    </subcellularLocation>
</comment>
<comment type="similarity">
    <text evidence="1">Belongs to the RNA methyltransferase RlmH family.</text>
</comment>
<reference key="1">
    <citation type="submission" date="2008-10" db="EMBL/GenBank/DDBJ databases">
        <title>The complete genome sequence of Helicobacter pylori strain P12.</title>
        <authorList>
            <person name="Fischer W."/>
            <person name="Windhager L."/>
            <person name="Karnholz A."/>
            <person name="Zeiller M."/>
            <person name="Zimmer R."/>
            <person name="Haas R."/>
        </authorList>
    </citation>
    <scope>NUCLEOTIDE SEQUENCE [LARGE SCALE GENOMIC DNA]</scope>
    <source>
        <strain>P12</strain>
    </source>
</reference>
<protein>
    <recommendedName>
        <fullName evidence="1">Ribosomal RNA large subunit methyltransferase H</fullName>
        <ecNumber evidence="1">2.1.1.177</ecNumber>
    </recommendedName>
    <alternativeName>
        <fullName evidence="1">23S rRNA (pseudouridine1915-N3)-methyltransferase</fullName>
    </alternativeName>
    <alternativeName>
        <fullName evidence="1">23S rRNA m3Psi1915 methyltransferase</fullName>
    </alternativeName>
    <alternativeName>
        <fullName evidence="1">rRNA (pseudouridine-N3-)-methyltransferase RlmH</fullName>
    </alternativeName>
</protein>
<keyword id="KW-0963">Cytoplasm</keyword>
<keyword id="KW-0489">Methyltransferase</keyword>
<keyword id="KW-0698">rRNA processing</keyword>
<keyword id="KW-0949">S-adenosyl-L-methionine</keyword>
<keyword id="KW-0808">Transferase</keyword>
<accession>B6JMG9</accession>
<sequence>MRCVVYSIAKSSPLELVKIYQKQCKRFDCELELVDLFPKNTANAQKVSKELAQKSYSLAFEPYLNLKAKNIALHPKAQRGDSFAFSKMLENHLNINFFIAGAYGFEENFLKDCQAWSLSEMTFSHEVAKIVLCEQIYRALSIIFKHPYHK</sequence>